<dbReference type="EC" id="2.7.1.24" evidence="1"/>
<dbReference type="EMBL" id="CP000038">
    <property type="protein sequence ID" value="AAZ86906.1"/>
    <property type="molecule type" value="Genomic_DNA"/>
</dbReference>
<dbReference type="RefSeq" id="WP_001269520.1">
    <property type="nucleotide sequence ID" value="NC_007384.1"/>
</dbReference>
<dbReference type="SMR" id="Q3Z5Q6"/>
<dbReference type="GeneID" id="93777332"/>
<dbReference type="KEGG" id="ssn:SSON_0111"/>
<dbReference type="HOGENOM" id="CLU_057180_1_2_6"/>
<dbReference type="UniPathway" id="UPA00241">
    <property type="reaction ID" value="UER00356"/>
</dbReference>
<dbReference type="Proteomes" id="UP000002529">
    <property type="component" value="Chromosome"/>
</dbReference>
<dbReference type="GO" id="GO:0005737">
    <property type="term" value="C:cytoplasm"/>
    <property type="evidence" value="ECO:0007669"/>
    <property type="project" value="UniProtKB-SubCell"/>
</dbReference>
<dbReference type="GO" id="GO:0005524">
    <property type="term" value="F:ATP binding"/>
    <property type="evidence" value="ECO:0007669"/>
    <property type="project" value="UniProtKB-UniRule"/>
</dbReference>
<dbReference type="GO" id="GO:0004140">
    <property type="term" value="F:dephospho-CoA kinase activity"/>
    <property type="evidence" value="ECO:0007669"/>
    <property type="project" value="UniProtKB-UniRule"/>
</dbReference>
<dbReference type="GO" id="GO:0015937">
    <property type="term" value="P:coenzyme A biosynthetic process"/>
    <property type="evidence" value="ECO:0007669"/>
    <property type="project" value="UniProtKB-UniRule"/>
</dbReference>
<dbReference type="CDD" id="cd02022">
    <property type="entry name" value="DPCK"/>
    <property type="match status" value="1"/>
</dbReference>
<dbReference type="FunFam" id="3.40.50.300:FF:000518">
    <property type="entry name" value="Dephospho-CoA kinase"/>
    <property type="match status" value="1"/>
</dbReference>
<dbReference type="Gene3D" id="3.40.50.300">
    <property type="entry name" value="P-loop containing nucleotide triphosphate hydrolases"/>
    <property type="match status" value="1"/>
</dbReference>
<dbReference type="HAMAP" id="MF_00376">
    <property type="entry name" value="Dephospho_CoA_kinase"/>
    <property type="match status" value="1"/>
</dbReference>
<dbReference type="InterPro" id="IPR001977">
    <property type="entry name" value="Depp_CoAkinase"/>
</dbReference>
<dbReference type="InterPro" id="IPR027417">
    <property type="entry name" value="P-loop_NTPase"/>
</dbReference>
<dbReference type="NCBIfam" id="TIGR00152">
    <property type="entry name" value="dephospho-CoA kinase"/>
    <property type="match status" value="1"/>
</dbReference>
<dbReference type="PANTHER" id="PTHR10695:SF46">
    <property type="entry name" value="BIFUNCTIONAL COENZYME A SYNTHASE-RELATED"/>
    <property type="match status" value="1"/>
</dbReference>
<dbReference type="PANTHER" id="PTHR10695">
    <property type="entry name" value="DEPHOSPHO-COA KINASE-RELATED"/>
    <property type="match status" value="1"/>
</dbReference>
<dbReference type="Pfam" id="PF01121">
    <property type="entry name" value="CoaE"/>
    <property type="match status" value="1"/>
</dbReference>
<dbReference type="SUPFAM" id="SSF52540">
    <property type="entry name" value="P-loop containing nucleoside triphosphate hydrolases"/>
    <property type="match status" value="1"/>
</dbReference>
<dbReference type="PROSITE" id="PS51219">
    <property type="entry name" value="DPCK"/>
    <property type="match status" value="1"/>
</dbReference>
<name>COAE_SHISS</name>
<evidence type="ECO:0000255" key="1">
    <source>
        <dbReference type="HAMAP-Rule" id="MF_00376"/>
    </source>
</evidence>
<keyword id="KW-0067">ATP-binding</keyword>
<keyword id="KW-0173">Coenzyme A biosynthesis</keyword>
<keyword id="KW-0963">Cytoplasm</keyword>
<keyword id="KW-0418">Kinase</keyword>
<keyword id="KW-0547">Nucleotide-binding</keyword>
<keyword id="KW-1185">Reference proteome</keyword>
<keyword id="KW-0808">Transferase</keyword>
<feature type="chain" id="PRO_0000243341" description="Dephospho-CoA kinase">
    <location>
        <begin position="1"/>
        <end position="206"/>
    </location>
</feature>
<feature type="domain" description="DPCK" evidence="1">
    <location>
        <begin position="4"/>
        <end position="200"/>
    </location>
</feature>
<feature type="binding site" evidence="1">
    <location>
        <begin position="12"/>
        <end position="17"/>
    </location>
    <ligand>
        <name>ATP</name>
        <dbReference type="ChEBI" id="CHEBI:30616"/>
    </ligand>
</feature>
<reference key="1">
    <citation type="journal article" date="2005" name="Nucleic Acids Res.">
        <title>Genome dynamics and diversity of Shigella species, the etiologic agents of bacillary dysentery.</title>
        <authorList>
            <person name="Yang F."/>
            <person name="Yang J."/>
            <person name="Zhang X."/>
            <person name="Chen L."/>
            <person name="Jiang Y."/>
            <person name="Yan Y."/>
            <person name="Tang X."/>
            <person name="Wang J."/>
            <person name="Xiong Z."/>
            <person name="Dong J."/>
            <person name="Xue Y."/>
            <person name="Zhu Y."/>
            <person name="Xu X."/>
            <person name="Sun L."/>
            <person name="Chen S."/>
            <person name="Nie H."/>
            <person name="Peng J."/>
            <person name="Xu J."/>
            <person name="Wang Y."/>
            <person name="Yuan Z."/>
            <person name="Wen Y."/>
            <person name="Yao Z."/>
            <person name="Shen Y."/>
            <person name="Qiang B."/>
            <person name="Hou Y."/>
            <person name="Yu J."/>
            <person name="Jin Q."/>
        </authorList>
    </citation>
    <scope>NUCLEOTIDE SEQUENCE [LARGE SCALE GENOMIC DNA]</scope>
    <source>
        <strain>Ss046</strain>
    </source>
</reference>
<sequence length="206" mass="22622">MRYIVALTGGIGSGKSTVANAFADLGINVIDADIIARQVVEPGAPALHAIADHFGANMIAADGTLQRRALRERIFANPEEKNWLNALLHPLIQQETQHQIQQATSPYVLWVVPLLVENSLYKKANRVLVVDVSPETQLKRTMQRDDVTREHVEQILAAQATREARLAVADDVIDNNGAPDAIASDVARLHAHYLQLASQFVSQEKP</sequence>
<proteinExistence type="inferred from homology"/>
<accession>Q3Z5Q6</accession>
<comment type="function">
    <text evidence="1">Catalyzes the phosphorylation of the 3'-hydroxyl group of dephosphocoenzyme A to form coenzyme A.</text>
</comment>
<comment type="catalytic activity">
    <reaction evidence="1">
        <text>3'-dephospho-CoA + ATP = ADP + CoA + H(+)</text>
        <dbReference type="Rhea" id="RHEA:18245"/>
        <dbReference type="ChEBI" id="CHEBI:15378"/>
        <dbReference type="ChEBI" id="CHEBI:30616"/>
        <dbReference type="ChEBI" id="CHEBI:57287"/>
        <dbReference type="ChEBI" id="CHEBI:57328"/>
        <dbReference type="ChEBI" id="CHEBI:456216"/>
        <dbReference type="EC" id="2.7.1.24"/>
    </reaction>
</comment>
<comment type="pathway">
    <text evidence="1">Cofactor biosynthesis; coenzyme A biosynthesis; CoA from (R)-pantothenate: step 5/5.</text>
</comment>
<comment type="subcellular location">
    <subcellularLocation>
        <location evidence="1">Cytoplasm</location>
    </subcellularLocation>
</comment>
<comment type="similarity">
    <text evidence="1">Belongs to the CoaE family.</text>
</comment>
<gene>
    <name evidence="1" type="primary">coaE</name>
    <name type="ordered locus">SSON_0111</name>
</gene>
<protein>
    <recommendedName>
        <fullName evidence="1">Dephospho-CoA kinase</fullName>
        <ecNumber evidence="1">2.7.1.24</ecNumber>
    </recommendedName>
    <alternativeName>
        <fullName evidence="1">Dephosphocoenzyme A kinase</fullName>
    </alternativeName>
</protein>
<organism>
    <name type="scientific">Shigella sonnei (strain Ss046)</name>
    <dbReference type="NCBI Taxonomy" id="300269"/>
    <lineage>
        <taxon>Bacteria</taxon>
        <taxon>Pseudomonadati</taxon>
        <taxon>Pseudomonadota</taxon>
        <taxon>Gammaproteobacteria</taxon>
        <taxon>Enterobacterales</taxon>
        <taxon>Enterobacteriaceae</taxon>
        <taxon>Shigella</taxon>
    </lineage>
</organism>